<gene>
    <name evidence="6" type="primary">isy-1</name>
    <name evidence="6" type="ORF">F53B7.3</name>
</gene>
<organism evidence="5">
    <name type="scientific">Caenorhabditis elegans</name>
    <dbReference type="NCBI Taxonomy" id="6239"/>
    <lineage>
        <taxon>Eukaryota</taxon>
        <taxon>Metazoa</taxon>
        <taxon>Ecdysozoa</taxon>
        <taxon>Nematoda</taxon>
        <taxon>Chromadorea</taxon>
        <taxon>Rhabditida</taxon>
        <taxon>Rhabditina</taxon>
        <taxon>Rhabditomorpha</taxon>
        <taxon>Rhabditoidea</taxon>
        <taxon>Rhabditidae</taxon>
        <taxon>Peloderinae</taxon>
        <taxon>Caenorhabditis</taxon>
    </lineage>
</organism>
<protein>
    <recommendedName>
        <fullName evidence="4">Protein isy-1</fullName>
    </recommendedName>
</protein>
<feature type="chain" id="PRO_0000448070" description="Protein isy-1">
    <location>
        <begin position="1"/>
        <end position="267"/>
    </location>
</feature>
<feature type="region of interest" description="Disordered" evidence="2">
    <location>
        <begin position="195"/>
        <end position="221"/>
    </location>
</feature>
<feature type="coiled-coil region" evidence="1">
    <location>
        <begin position="175"/>
        <end position="204"/>
    </location>
</feature>
<feature type="mutagenesis site" description="In dma50; up-regulates expression of the transcription factor zip-10 and its downstream target asp-17." evidence="3">
    <original>E</original>
    <variation>K</variation>
    <location>
        <position position="180"/>
    </location>
</feature>
<reference evidence="5" key="1">
    <citation type="journal article" date="1998" name="Science">
        <title>Genome sequence of the nematode C. elegans: a platform for investigating biology.</title>
        <authorList>
            <consortium name="The C. elegans sequencing consortium"/>
        </authorList>
    </citation>
    <scope>NUCLEOTIDE SEQUENCE [LARGE SCALE GENOMIC DNA]</scope>
    <source>
        <strain evidence="5">Bristol N2</strain>
    </source>
</reference>
<reference evidence="4" key="2">
    <citation type="journal article" date="2018" name="Elife">
        <title>A genetic program mediates cold-warming response and promotes stress-induced phenoptosis in C. elegans.</title>
        <authorList>
            <person name="Jiang W."/>
            <person name="Wei Y."/>
            <person name="Long Y."/>
            <person name="Owen A."/>
            <person name="Wang B."/>
            <person name="Wu X."/>
            <person name="Luo S."/>
            <person name="Dang Y."/>
            <person name="Ma D.K."/>
        </authorList>
    </citation>
    <scope>FUNCTION</scope>
    <scope>SUBCELLULAR LOCATION</scope>
    <scope>TISSUE SPECIFICITY</scope>
    <scope>DISRUPTION PHENOTYPE</scope>
    <scope>MUTAGENESIS OF GLU-180</scope>
</reference>
<accession>Q20716</accession>
<proteinExistence type="evidence at protein level"/>
<keyword id="KW-0002">3D-structure</keyword>
<keyword id="KW-0175">Coiled coil</keyword>
<keyword id="KW-0539">Nucleus</keyword>
<keyword id="KW-1185">Reference proteome</keyword>
<dbReference type="EMBL" id="BX284605">
    <property type="protein sequence ID" value="CAA96652.1"/>
    <property type="molecule type" value="Genomic_DNA"/>
</dbReference>
<dbReference type="PIR" id="T22548">
    <property type="entry name" value="T22548"/>
</dbReference>
<dbReference type="RefSeq" id="NP_505803.1">
    <property type="nucleotide sequence ID" value="NM_073402.7"/>
</dbReference>
<dbReference type="PDB" id="8RO0">
    <property type="method" value="EM"/>
    <property type="resolution" value="2.90 A"/>
    <property type="chains" value="D=1-267"/>
</dbReference>
<dbReference type="PDB" id="8RO1">
    <property type="method" value="EM"/>
    <property type="resolution" value="3.00 A"/>
    <property type="chains" value="D=1-267"/>
</dbReference>
<dbReference type="PDBsum" id="8RO0"/>
<dbReference type="PDBsum" id="8RO1"/>
<dbReference type="EMDB" id="EMD-19397"/>
<dbReference type="EMDB" id="EMD-19398"/>
<dbReference type="SMR" id="Q20716"/>
<dbReference type="FunCoup" id="Q20716">
    <property type="interactions" value="2918"/>
</dbReference>
<dbReference type="IntAct" id="Q20716">
    <property type="interactions" value="1"/>
</dbReference>
<dbReference type="STRING" id="6239.F53B7.3.2"/>
<dbReference type="PaxDb" id="6239-F53B7.3.1"/>
<dbReference type="PeptideAtlas" id="Q20716"/>
<dbReference type="EnsemblMetazoa" id="F53B7.3.1">
    <property type="protein sequence ID" value="F53B7.3.1"/>
    <property type="gene ID" value="WBGene00009966"/>
</dbReference>
<dbReference type="GeneID" id="179524"/>
<dbReference type="KEGG" id="cel:CELE_F53B7.3"/>
<dbReference type="UCSC" id="F53B7.3">
    <property type="organism name" value="c. elegans"/>
</dbReference>
<dbReference type="AGR" id="WB:WBGene00009966"/>
<dbReference type="CTD" id="179524"/>
<dbReference type="WormBase" id="F53B7.3">
    <property type="protein sequence ID" value="CE05922"/>
    <property type="gene ID" value="WBGene00009966"/>
    <property type="gene designation" value="isy-1"/>
</dbReference>
<dbReference type="eggNOG" id="KOG3068">
    <property type="taxonomic scope" value="Eukaryota"/>
</dbReference>
<dbReference type="GeneTree" id="ENSGT00390000014109"/>
<dbReference type="HOGENOM" id="CLU_043453_0_1_1"/>
<dbReference type="InParanoid" id="Q20716"/>
<dbReference type="OMA" id="YHWERRI"/>
<dbReference type="OrthoDB" id="1739576at2759"/>
<dbReference type="PhylomeDB" id="Q20716"/>
<dbReference type="Reactome" id="R-CEL-6781823">
    <property type="pathway name" value="Formation of TC-NER Pre-Incision Complex"/>
</dbReference>
<dbReference type="Reactome" id="R-CEL-6782135">
    <property type="pathway name" value="Dual incision in TC-NER"/>
</dbReference>
<dbReference type="Reactome" id="R-CEL-6782210">
    <property type="pathway name" value="Gap-filling DNA repair synthesis and ligation in TC-NER"/>
</dbReference>
<dbReference type="Reactome" id="R-CEL-72163">
    <property type="pathway name" value="mRNA Splicing - Major Pathway"/>
</dbReference>
<dbReference type="PRO" id="PR:Q20716"/>
<dbReference type="Proteomes" id="UP000001940">
    <property type="component" value="Chromosome V"/>
</dbReference>
<dbReference type="Bgee" id="WBGene00009966">
    <property type="expression patterns" value="Expressed in germ line (C elegans) and 4 other cell types or tissues"/>
</dbReference>
<dbReference type="GO" id="GO:0071013">
    <property type="term" value="C:catalytic step 2 spliceosome"/>
    <property type="evidence" value="ECO:0000318"/>
    <property type="project" value="GO_Central"/>
</dbReference>
<dbReference type="GO" id="GO:0005634">
    <property type="term" value="C:nucleus"/>
    <property type="evidence" value="ECO:0000314"/>
    <property type="project" value="UniProtKB"/>
</dbReference>
<dbReference type="GO" id="GO:0071014">
    <property type="term" value="C:post-mRNA release spliceosomal complex"/>
    <property type="evidence" value="ECO:0000318"/>
    <property type="project" value="GO_Central"/>
</dbReference>
<dbReference type="GO" id="GO:0071020">
    <property type="term" value="C:post-spliceosomal complex"/>
    <property type="evidence" value="ECO:0000318"/>
    <property type="project" value="GO_Central"/>
</dbReference>
<dbReference type="GO" id="GO:0000974">
    <property type="term" value="C:Prp19 complex"/>
    <property type="evidence" value="ECO:0000318"/>
    <property type="project" value="GO_Central"/>
</dbReference>
<dbReference type="GO" id="GO:0000350">
    <property type="term" value="P:generation of catalytic spliceosome for second transesterification step"/>
    <property type="evidence" value="ECO:0000318"/>
    <property type="project" value="GO_Central"/>
</dbReference>
<dbReference type="GO" id="GO:0000389">
    <property type="term" value="P:mRNA 3'-splice site recognition"/>
    <property type="evidence" value="ECO:0000318"/>
    <property type="project" value="GO_Central"/>
</dbReference>
<dbReference type="GO" id="GO:2000634">
    <property type="term" value="P:regulation of primary miRNA processing"/>
    <property type="evidence" value="ECO:0000315"/>
    <property type="project" value="UniProtKB"/>
</dbReference>
<dbReference type="FunFam" id="1.10.287.660:FF:000001">
    <property type="entry name" value="pre-mRNA-splicing factor ISY1 homolog"/>
    <property type="match status" value="1"/>
</dbReference>
<dbReference type="Gene3D" id="1.10.287.660">
    <property type="entry name" value="Helix hairpin bin"/>
    <property type="match status" value="1"/>
</dbReference>
<dbReference type="InterPro" id="IPR029012">
    <property type="entry name" value="Helix_hairpin_bin_sf"/>
</dbReference>
<dbReference type="InterPro" id="IPR009360">
    <property type="entry name" value="Isy1"/>
</dbReference>
<dbReference type="InterPro" id="IPR037200">
    <property type="entry name" value="Isy1_sf"/>
</dbReference>
<dbReference type="PANTHER" id="PTHR13021">
    <property type="entry name" value="PRE-MRNA-SPLICING FACTOR ISY1"/>
    <property type="match status" value="1"/>
</dbReference>
<dbReference type="Pfam" id="PF06246">
    <property type="entry name" value="Isy1"/>
    <property type="match status" value="1"/>
</dbReference>
<dbReference type="SUPFAM" id="SSF140102">
    <property type="entry name" value="ISY1 domain-like"/>
    <property type="match status" value="1"/>
</dbReference>
<name>ISY1_CAEEL</name>
<comment type="function">
    <text evidence="3">Regulates the processing of the mir-60 microRNA (miRNA), which in turn negatively regulates the expression of the transcription factor zip-10 (PubMed:29664006). Does not affect the splicing of zip-10 (PubMed:29664006).</text>
</comment>
<comment type="subcellular location">
    <subcellularLocation>
        <location evidence="3">Nucleus</location>
    </subcellularLocation>
</comment>
<comment type="tissue specificity">
    <text evidence="3">Ubiquitously expressed.</text>
</comment>
<comment type="disruption phenotype">
    <text evidence="3">RNAi-mediated knockdown results in up-regulation of the transcription factor zip-10 and its downstream target asp-17.</text>
</comment>
<comment type="similarity">
    <text evidence="4">Belongs to the ISY1 family.</text>
</comment>
<evidence type="ECO:0000255" key="1"/>
<evidence type="ECO:0000256" key="2">
    <source>
        <dbReference type="SAM" id="MobiDB-lite"/>
    </source>
</evidence>
<evidence type="ECO:0000269" key="3">
    <source>
    </source>
</evidence>
<evidence type="ECO:0000305" key="4"/>
<evidence type="ECO:0000312" key="5">
    <source>
        <dbReference type="Proteomes" id="UP000001940"/>
    </source>
</evidence>
<evidence type="ECO:0000312" key="6">
    <source>
        <dbReference type="WormBase" id="F53B7.3"/>
    </source>
</evidence>
<sequence>MARNAEKAMTALARWRRMKEEEERGPIARRPHDVKDCRNLSDAERFRREIVRDASKKITAIQNPGLGEFKLRDLNDEVNRLIKLKHAWEQRIRELGGTDYRKYAQKELDAIGRETGNSRGYKYFGAAKDLPGVRELFEKSTEGEEQRRHRADLLRNIDAHYFGYLDDEDGRLIPLEKLIEEKNIERINKEFAEKQAQKQQTASDAAPENIYKVEEDDDDDLETQESTVIGEDGRPMTIRHVLLPTQQDIEEMLLEQKKQELMAKYLD</sequence>